<evidence type="ECO:0000250" key="1">
    <source>
        <dbReference type="UniProtKB" id="P31677"/>
    </source>
</evidence>
<evidence type="ECO:0000256" key="2">
    <source>
        <dbReference type="SAM" id="MobiDB-lite"/>
    </source>
</evidence>
<feature type="chain" id="PRO_0000348918" description="Trehalose-6-phosphate synthase">
    <location>
        <begin position="1"/>
        <end position="473"/>
    </location>
</feature>
<feature type="region of interest" description="Disordered" evidence="2">
    <location>
        <begin position="454"/>
        <end position="473"/>
    </location>
</feature>
<feature type="binding site" evidence="1">
    <location>
        <position position="10"/>
    </location>
    <ligand>
        <name>D-glucose 6-phosphate</name>
        <dbReference type="ChEBI" id="CHEBI:61548"/>
    </ligand>
</feature>
<feature type="binding site" evidence="1">
    <location>
        <begin position="21"/>
        <end position="22"/>
    </location>
    <ligand>
        <name>UDP-alpha-D-glucose</name>
        <dbReference type="ChEBI" id="CHEBI:58885"/>
    </ligand>
</feature>
<feature type="binding site" evidence="1">
    <location>
        <position position="76"/>
    </location>
    <ligand>
        <name>D-glucose 6-phosphate</name>
        <dbReference type="ChEBI" id="CHEBI:61548"/>
    </ligand>
</feature>
<feature type="binding site" evidence="1">
    <location>
        <position position="130"/>
    </location>
    <ligand>
        <name>D-glucose 6-phosphate</name>
        <dbReference type="ChEBI" id="CHEBI:61548"/>
    </ligand>
</feature>
<feature type="binding site" evidence="1">
    <location>
        <position position="262"/>
    </location>
    <ligand>
        <name>UDP-alpha-D-glucose</name>
        <dbReference type="ChEBI" id="CHEBI:58885"/>
    </ligand>
</feature>
<feature type="binding site" evidence="1">
    <location>
        <position position="267"/>
    </location>
    <ligand>
        <name>UDP-alpha-D-glucose</name>
        <dbReference type="ChEBI" id="CHEBI:58885"/>
    </ligand>
</feature>
<feature type="binding site" evidence="1">
    <location>
        <position position="300"/>
    </location>
    <ligand>
        <name>D-glucose 6-phosphate</name>
        <dbReference type="ChEBI" id="CHEBI:61548"/>
    </ligand>
</feature>
<feature type="binding site" evidence="1">
    <location>
        <position position="339"/>
    </location>
    <ligand>
        <name>UDP-alpha-D-glucose</name>
        <dbReference type="ChEBI" id="CHEBI:58885"/>
    </ligand>
</feature>
<feature type="binding site" evidence="1">
    <location>
        <begin position="365"/>
        <end position="369"/>
    </location>
    <ligand>
        <name>UDP-alpha-D-glucose</name>
        <dbReference type="ChEBI" id="CHEBI:58885"/>
    </ligand>
</feature>
<feature type="site" description="Involved in alpha anomer selectivity" evidence="1">
    <location>
        <position position="85"/>
    </location>
</feature>
<feature type="site" description="Involved in alpha anomer selectivity" evidence="1">
    <location>
        <position position="155"/>
    </location>
</feature>
<proteinExistence type="inferred from homology"/>
<gene>
    <name evidence="1" type="primary">otsA</name>
    <name type="ordered locus">SPAB_01230</name>
</gene>
<protein>
    <recommendedName>
        <fullName evidence="1">Trehalose-6-phosphate synthase</fullName>
        <shortName evidence="1">TPS</shortName>
        <ecNumber evidence="1">2.4.1.15</ecNumber>
    </recommendedName>
    <alternativeName>
        <fullName evidence="1">Alpha,alpha-trehalose-phosphate synthase [UDP-forming]</fullName>
    </alternativeName>
    <alternativeName>
        <fullName evidence="1">Osmoregulatory trehalose synthesis protein A</fullName>
        <shortName evidence="1">OtsA</shortName>
    </alternativeName>
    <alternativeName>
        <fullName evidence="1">UDP-glucose-glucosephosphate glucosyltransferase</fullName>
    </alternativeName>
</protein>
<comment type="function">
    <text evidence="1">Probably involved in the osmoprotection via the biosynthesis of trehalose. Catalyzes the transfer of glucose from UDP-alpha-D-glucose (UDP-Glc) to D-glucose 6-phosphate (Glc-6-P) to form trehalose-6-phosphate. Acts with retention of the anomeric configuration of the UDP-sugar donor.</text>
</comment>
<comment type="catalytic activity">
    <reaction evidence="1">
        <text>D-glucose 6-phosphate + UDP-alpha-D-glucose = alpha,alpha-trehalose 6-phosphate + UDP + H(+)</text>
        <dbReference type="Rhea" id="RHEA:18889"/>
        <dbReference type="ChEBI" id="CHEBI:15378"/>
        <dbReference type="ChEBI" id="CHEBI:58223"/>
        <dbReference type="ChEBI" id="CHEBI:58429"/>
        <dbReference type="ChEBI" id="CHEBI:58885"/>
        <dbReference type="ChEBI" id="CHEBI:61548"/>
        <dbReference type="EC" id="2.4.1.15"/>
    </reaction>
</comment>
<comment type="pathway">
    <text evidence="1">Glycan biosynthesis; trehalose biosynthesis.</text>
</comment>
<comment type="subunit">
    <text evidence="1">Homotetramer.</text>
</comment>
<comment type="similarity">
    <text evidence="1">Belongs to the glycosyltransferase 20 family.</text>
</comment>
<keyword id="KW-0328">Glycosyltransferase</keyword>
<keyword id="KW-0808">Transferase</keyword>
<organism>
    <name type="scientific">Salmonella paratyphi B (strain ATCC BAA-1250 / SPB7)</name>
    <dbReference type="NCBI Taxonomy" id="1016998"/>
    <lineage>
        <taxon>Bacteria</taxon>
        <taxon>Pseudomonadati</taxon>
        <taxon>Pseudomonadota</taxon>
        <taxon>Gammaproteobacteria</taxon>
        <taxon>Enterobacterales</taxon>
        <taxon>Enterobacteriaceae</taxon>
        <taxon>Salmonella</taxon>
    </lineage>
</organism>
<accession>A9MU86</accession>
<sequence>MSRLVVVSNRIAPPDNKGGAGGLAVGVLGALKAAGGLWFGWSGETGNEDEPLKKVTKGNITWASFNLSEQDYEDYYCQFSNAVLWPAFHYRLDLVQFQRPAWEGYMRVNALLADKLLPLIKENDIIWVHDYHLLPFASELRKRGVNNRIGFFLHIPFPTPEIFNALPPHDELLEQLCDFDLLGFQTENDRLAFLDSLSSQTRVTTRSGKQHIAWGKDFQTEVYPIGIEPDEIALQAAGPLPPKLAQLKAELKNVKNIFSVERLDYSKGLPERFLAYEALLENYPQHRGKIRYTQIAPTSRGEVQAYQDIRHQLETEAGRINGKYGQLGWTPLYYLNQHFDRKLLMKIFRYSDVGLVTPLRDGMNLVAKEFVAAQDPANPGVLVLSQFAGAANELTSALIVNPYDRDDVAAALNRALTMPLAERISRHAEMLDVIVKNDINRWQERFIHDLKEVTPRSPERQQQNNVATFPKLA</sequence>
<dbReference type="EC" id="2.4.1.15" evidence="1"/>
<dbReference type="EMBL" id="CP000886">
    <property type="protein sequence ID" value="ABX66642.1"/>
    <property type="molecule type" value="Genomic_DNA"/>
</dbReference>
<dbReference type="RefSeq" id="WP_000089042.1">
    <property type="nucleotide sequence ID" value="NC_010102.1"/>
</dbReference>
<dbReference type="SMR" id="A9MU86"/>
<dbReference type="CAZy" id="GT20">
    <property type="family name" value="Glycosyltransferase Family 20"/>
</dbReference>
<dbReference type="KEGG" id="spq:SPAB_01230"/>
<dbReference type="PATRIC" id="fig|1016998.12.peg.1159"/>
<dbReference type="HOGENOM" id="CLU_002351_7_1_6"/>
<dbReference type="BioCyc" id="SENT1016998:SPAB_RS05105-MONOMER"/>
<dbReference type="UniPathway" id="UPA00299"/>
<dbReference type="Proteomes" id="UP000008556">
    <property type="component" value="Chromosome"/>
</dbReference>
<dbReference type="GO" id="GO:0003825">
    <property type="term" value="F:alpha,alpha-trehalose-phosphate synthase (UDP-forming) activity"/>
    <property type="evidence" value="ECO:0007669"/>
    <property type="project" value="UniProtKB-EC"/>
</dbReference>
<dbReference type="GO" id="GO:0005992">
    <property type="term" value="P:trehalose biosynthetic process"/>
    <property type="evidence" value="ECO:0007669"/>
    <property type="project" value="UniProtKB-UniPathway"/>
</dbReference>
<dbReference type="CDD" id="cd03788">
    <property type="entry name" value="GT20_TPS"/>
    <property type="match status" value="1"/>
</dbReference>
<dbReference type="FunFam" id="3.40.50.2000:FF:000024">
    <property type="entry name" value="Trehalose-6-phosphate synthase"/>
    <property type="match status" value="1"/>
</dbReference>
<dbReference type="Gene3D" id="3.40.50.2000">
    <property type="entry name" value="Glycogen Phosphorylase B"/>
    <property type="match status" value="2"/>
</dbReference>
<dbReference type="InterPro" id="IPR001830">
    <property type="entry name" value="Glyco_trans_20"/>
</dbReference>
<dbReference type="InterPro" id="IPR012766">
    <property type="entry name" value="Trehalose_OtsA"/>
</dbReference>
<dbReference type="NCBIfam" id="NF007513">
    <property type="entry name" value="PRK10117.1"/>
    <property type="match status" value="1"/>
</dbReference>
<dbReference type="NCBIfam" id="TIGR02400">
    <property type="entry name" value="trehalose_OtsA"/>
    <property type="match status" value="1"/>
</dbReference>
<dbReference type="PANTHER" id="PTHR10788:SF106">
    <property type="entry name" value="BCDNA.GH08860"/>
    <property type="match status" value="1"/>
</dbReference>
<dbReference type="PANTHER" id="PTHR10788">
    <property type="entry name" value="TREHALOSE-6-PHOSPHATE SYNTHASE"/>
    <property type="match status" value="1"/>
</dbReference>
<dbReference type="Pfam" id="PF00982">
    <property type="entry name" value="Glyco_transf_20"/>
    <property type="match status" value="1"/>
</dbReference>
<dbReference type="SUPFAM" id="SSF53756">
    <property type="entry name" value="UDP-Glycosyltransferase/glycogen phosphorylase"/>
    <property type="match status" value="1"/>
</dbReference>
<name>OTSA_SALPB</name>
<reference key="1">
    <citation type="submission" date="2007-11" db="EMBL/GenBank/DDBJ databases">
        <authorList>
            <consortium name="The Salmonella enterica serovar Paratyphi B Genome Sequencing Project"/>
            <person name="McClelland M."/>
            <person name="Sanderson E.K."/>
            <person name="Porwollik S."/>
            <person name="Spieth J."/>
            <person name="Clifton W.S."/>
            <person name="Fulton R."/>
            <person name="Cordes M."/>
            <person name="Wollam A."/>
            <person name="Shah N."/>
            <person name="Pepin K."/>
            <person name="Bhonagiri V."/>
            <person name="Nash W."/>
            <person name="Johnson M."/>
            <person name="Thiruvilangam P."/>
            <person name="Wilson R."/>
        </authorList>
    </citation>
    <scope>NUCLEOTIDE SEQUENCE [LARGE SCALE GENOMIC DNA]</scope>
    <source>
        <strain>ATCC BAA-1250 / SPB7</strain>
    </source>
</reference>